<evidence type="ECO:0000255" key="1">
    <source>
        <dbReference type="HAMAP-Rule" id="MF_02007"/>
    </source>
</evidence>
<proteinExistence type="inferred from homology"/>
<sequence length="409" mass="44969">MSHPEAPITPEVEADLAIARRGCDELLVESEFARKLARSRATGVPLRIKLGLDPTAPDIHLGHTVVLNKMRQLQDLGHNVIFLIGDFTSTIGDPSGRNSTRPPLTREQIETNAKTYYAQASLVLDPARTEIRYNSEWCDPLGARGMIQLASRYTVARMMEREDFTRRFKGGVPIAVHEFLYPLLQGYDSVALKADLELGGTDQKFNLLVGRELQKEYGQEQQCILTMPLLVGTDGVEKMSKSKGNYIGISEAPESMFGKLMSISDTLMWRYYELLSFRSLADIAALKAEIDGGRNPRDAKVALAQEIVARFHSPQAAEAALAAFEARFRDGAIPEDMPEVTVGGAPQGILRILREAGLVASGSEAQRNVEQGGVRVNGDRVEDKSLQLSAGTYVVQVGKRKFARVKLVG</sequence>
<protein>
    <recommendedName>
        <fullName evidence="1">Tyrosine--tRNA ligase</fullName>
        <ecNumber evidence="1">6.1.1.1</ecNumber>
    </recommendedName>
    <alternativeName>
        <fullName evidence="1">Tyrosyl-tRNA synthetase</fullName>
        <shortName evidence="1">TyrRS</shortName>
    </alternativeName>
</protein>
<name>SYY_BORPE</name>
<comment type="function">
    <text evidence="1">Catalyzes the attachment of tyrosine to tRNA(Tyr) in a two-step reaction: tyrosine is first activated by ATP to form Tyr-AMP and then transferred to the acceptor end of tRNA(Tyr).</text>
</comment>
<comment type="catalytic activity">
    <reaction evidence="1">
        <text>tRNA(Tyr) + L-tyrosine + ATP = L-tyrosyl-tRNA(Tyr) + AMP + diphosphate + H(+)</text>
        <dbReference type="Rhea" id="RHEA:10220"/>
        <dbReference type="Rhea" id="RHEA-COMP:9706"/>
        <dbReference type="Rhea" id="RHEA-COMP:9707"/>
        <dbReference type="ChEBI" id="CHEBI:15378"/>
        <dbReference type="ChEBI" id="CHEBI:30616"/>
        <dbReference type="ChEBI" id="CHEBI:33019"/>
        <dbReference type="ChEBI" id="CHEBI:58315"/>
        <dbReference type="ChEBI" id="CHEBI:78442"/>
        <dbReference type="ChEBI" id="CHEBI:78536"/>
        <dbReference type="ChEBI" id="CHEBI:456215"/>
        <dbReference type="EC" id="6.1.1.1"/>
    </reaction>
</comment>
<comment type="subunit">
    <text evidence="1">Homodimer.</text>
</comment>
<comment type="subcellular location">
    <subcellularLocation>
        <location evidence="1">Cytoplasm</location>
    </subcellularLocation>
</comment>
<comment type="similarity">
    <text evidence="1">Belongs to the class-I aminoacyl-tRNA synthetase family. TyrS type 2 subfamily.</text>
</comment>
<keyword id="KW-0030">Aminoacyl-tRNA synthetase</keyword>
<keyword id="KW-0067">ATP-binding</keyword>
<keyword id="KW-0963">Cytoplasm</keyword>
<keyword id="KW-0436">Ligase</keyword>
<keyword id="KW-0547">Nucleotide-binding</keyword>
<keyword id="KW-0648">Protein biosynthesis</keyword>
<keyword id="KW-1185">Reference proteome</keyword>
<keyword id="KW-0694">RNA-binding</keyword>
<organism>
    <name type="scientific">Bordetella pertussis (strain Tohama I / ATCC BAA-589 / NCTC 13251)</name>
    <dbReference type="NCBI Taxonomy" id="257313"/>
    <lineage>
        <taxon>Bacteria</taxon>
        <taxon>Pseudomonadati</taxon>
        <taxon>Pseudomonadota</taxon>
        <taxon>Betaproteobacteria</taxon>
        <taxon>Burkholderiales</taxon>
        <taxon>Alcaligenaceae</taxon>
        <taxon>Bordetella</taxon>
    </lineage>
</organism>
<reference key="1">
    <citation type="journal article" date="2003" name="Nat. Genet.">
        <title>Comparative analysis of the genome sequences of Bordetella pertussis, Bordetella parapertussis and Bordetella bronchiseptica.</title>
        <authorList>
            <person name="Parkhill J."/>
            <person name="Sebaihia M."/>
            <person name="Preston A."/>
            <person name="Murphy L.D."/>
            <person name="Thomson N.R."/>
            <person name="Harris D.E."/>
            <person name="Holden M.T.G."/>
            <person name="Churcher C.M."/>
            <person name="Bentley S.D."/>
            <person name="Mungall K.L."/>
            <person name="Cerdeno-Tarraga A.-M."/>
            <person name="Temple L."/>
            <person name="James K.D."/>
            <person name="Harris B."/>
            <person name="Quail M.A."/>
            <person name="Achtman M."/>
            <person name="Atkin R."/>
            <person name="Baker S."/>
            <person name="Basham D."/>
            <person name="Bason N."/>
            <person name="Cherevach I."/>
            <person name="Chillingworth T."/>
            <person name="Collins M."/>
            <person name="Cronin A."/>
            <person name="Davis P."/>
            <person name="Doggett J."/>
            <person name="Feltwell T."/>
            <person name="Goble A."/>
            <person name="Hamlin N."/>
            <person name="Hauser H."/>
            <person name="Holroyd S."/>
            <person name="Jagels K."/>
            <person name="Leather S."/>
            <person name="Moule S."/>
            <person name="Norberczak H."/>
            <person name="O'Neil S."/>
            <person name="Ormond D."/>
            <person name="Price C."/>
            <person name="Rabbinowitsch E."/>
            <person name="Rutter S."/>
            <person name="Sanders M."/>
            <person name="Saunders D."/>
            <person name="Seeger K."/>
            <person name="Sharp S."/>
            <person name="Simmonds M."/>
            <person name="Skelton J."/>
            <person name="Squares R."/>
            <person name="Squares S."/>
            <person name="Stevens K."/>
            <person name="Unwin L."/>
            <person name="Whitehead S."/>
            <person name="Barrell B.G."/>
            <person name="Maskell D.J."/>
        </authorList>
    </citation>
    <scope>NUCLEOTIDE SEQUENCE [LARGE SCALE GENOMIC DNA]</scope>
    <source>
        <strain>Tohama I / ATCC BAA-589 / NCTC 13251</strain>
    </source>
</reference>
<dbReference type="EC" id="6.1.1.1" evidence="1"/>
<dbReference type="EMBL" id="BX640420">
    <property type="protein sequence ID" value="CAE43226.1"/>
    <property type="molecule type" value="Genomic_DNA"/>
</dbReference>
<dbReference type="RefSeq" id="NP_881533.1">
    <property type="nucleotide sequence ID" value="NC_002929.2"/>
</dbReference>
<dbReference type="RefSeq" id="WP_003814877.1">
    <property type="nucleotide sequence ID" value="NZ_CP039022.1"/>
</dbReference>
<dbReference type="SMR" id="Q7VUW5"/>
<dbReference type="STRING" id="257313.BP2954"/>
<dbReference type="PaxDb" id="257313-BP2954"/>
<dbReference type="GeneID" id="69602879"/>
<dbReference type="KEGG" id="bpe:BP2954"/>
<dbReference type="PATRIC" id="fig|257313.5.peg.3193"/>
<dbReference type="eggNOG" id="COG0162">
    <property type="taxonomic scope" value="Bacteria"/>
</dbReference>
<dbReference type="HOGENOM" id="CLU_024003_5_0_4"/>
<dbReference type="Proteomes" id="UP000002676">
    <property type="component" value="Chromosome"/>
</dbReference>
<dbReference type="GO" id="GO:0005829">
    <property type="term" value="C:cytosol"/>
    <property type="evidence" value="ECO:0007669"/>
    <property type="project" value="TreeGrafter"/>
</dbReference>
<dbReference type="GO" id="GO:0005524">
    <property type="term" value="F:ATP binding"/>
    <property type="evidence" value="ECO:0007669"/>
    <property type="project" value="UniProtKB-UniRule"/>
</dbReference>
<dbReference type="GO" id="GO:0003723">
    <property type="term" value="F:RNA binding"/>
    <property type="evidence" value="ECO:0007669"/>
    <property type="project" value="UniProtKB-KW"/>
</dbReference>
<dbReference type="GO" id="GO:0004831">
    <property type="term" value="F:tyrosine-tRNA ligase activity"/>
    <property type="evidence" value="ECO:0007669"/>
    <property type="project" value="UniProtKB-UniRule"/>
</dbReference>
<dbReference type="GO" id="GO:0006437">
    <property type="term" value="P:tyrosyl-tRNA aminoacylation"/>
    <property type="evidence" value="ECO:0007669"/>
    <property type="project" value="UniProtKB-UniRule"/>
</dbReference>
<dbReference type="CDD" id="cd00165">
    <property type="entry name" value="S4"/>
    <property type="match status" value="1"/>
</dbReference>
<dbReference type="CDD" id="cd00805">
    <property type="entry name" value="TyrRS_core"/>
    <property type="match status" value="1"/>
</dbReference>
<dbReference type="FunFam" id="1.10.240.10:FF:000006">
    <property type="entry name" value="Tyrosine--tRNA ligase"/>
    <property type="match status" value="1"/>
</dbReference>
<dbReference type="FunFam" id="3.40.50.620:FF:000061">
    <property type="entry name" value="Tyrosine--tRNA ligase"/>
    <property type="match status" value="1"/>
</dbReference>
<dbReference type="Gene3D" id="3.40.50.620">
    <property type="entry name" value="HUPs"/>
    <property type="match status" value="1"/>
</dbReference>
<dbReference type="Gene3D" id="3.10.290.10">
    <property type="entry name" value="RNA-binding S4 domain"/>
    <property type="match status" value="1"/>
</dbReference>
<dbReference type="Gene3D" id="1.10.240.10">
    <property type="entry name" value="Tyrosyl-Transfer RNA Synthetase"/>
    <property type="match status" value="1"/>
</dbReference>
<dbReference type="HAMAP" id="MF_02007">
    <property type="entry name" value="Tyr_tRNA_synth_type2"/>
    <property type="match status" value="1"/>
</dbReference>
<dbReference type="InterPro" id="IPR001412">
    <property type="entry name" value="aa-tRNA-synth_I_CS"/>
</dbReference>
<dbReference type="InterPro" id="IPR002305">
    <property type="entry name" value="aa-tRNA-synth_Ic"/>
</dbReference>
<dbReference type="InterPro" id="IPR014729">
    <property type="entry name" value="Rossmann-like_a/b/a_fold"/>
</dbReference>
<dbReference type="InterPro" id="IPR002942">
    <property type="entry name" value="S4_RNA-bd"/>
</dbReference>
<dbReference type="InterPro" id="IPR036986">
    <property type="entry name" value="S4_RNA-bd_sf"/>
</dbReference>
<dbReference type="InterPro" id="IPR054608">
    <property type="entry name" value="SYY-like_C"/>
</dbReference>
<dbReference type="InterPro" id="IPR002307">
    <property type="entry name" value="Tyr-tRNA-ligase"/>
</dbReference>
<dbReference type="InterPro" id="IPR024088">
    <property type="entry name" value="Tyr-tRNA-ligase_bac-type"/>
</dbReference>
<dbReference type="InterPro" id="IPR024108">
    <property type="entry name" value="Tyr-tRNA-ligase_bac_2"/>
</dbReference>
<dbReference type="NCBIfam" id="TIGR00234">
    <property type="entry name" value="tyrS"/>
    <property type="match status" value="1"/>
</dbReference>
<dbReference type="PANTHER" id="PTHR11766:SF1">
    <property type="entry name" value="TYROSINE--TRNA LIGASE"/>
    <property type="match status" value="1"/>
</dbReference>
<dbReference type="PANTHER" id="PTHR11766">
    <property type="entry name" value="TYROSYL-TRNA SYNTHETASE"/>
    <property type="match status" value="1"/>
</dbReference>
<dbReference type="Pfam" id="PF22421">
    <property type="entry name" value="SYY_C-terminal"/>
    <property type="match status" value="1"/>
</dbReference>
<dbReference type="Pfam" id="PF00579">
    <property type="entry name" value="tRNA-synt_1b"/>
    <property type="match status" value="1"/>
</dbReference>
<dbReference type="PRINTS" id="PR01040">
    <property type="entry name" value="TRNASYNTHTYR"/>
</dbReference>
<dbReference type="SMART" id="SM00363">
    <property type="entry name" value="S4"/>
    <property type="match status" value="1"/>
</dbReference>
<dbReference type="SUPFAM" id="SSF55174">
    <property type="entry name" value="Alpha-L RNA-binding motif"/>
    <property type="match status" value="1"/>
</dbReference>
<dbReference type="SUPFAM" id="SSF52374">
    <property type="entry name" value="Nucleotidylyl transferase"/>
    <property type="match status" value="1"/>
</dbReference>
<dbReference type="PROSITE" id="PS00178">
    <property type="entry name" value="AA_TRNA_LIGASE_I"/>
    <property type="match status" value="1"/>
</dbReference>
<dbReference type="PROSITE" id="PS50889">
    <property type="entry name" value="S4"/>
    <property type="match status" value="1"/>
</dbReference>
<feature type="chain" id="PRO_0000236699" description="Tyrosine--tRNA ligase">
    <location>
        <begin position="1"/>
        <end position="409"/>
    </location>
</feature>
<feature type="domain" description="S4 RNA-binding" evidence="1">
    <location>
        <begin position="347"/>
        <end position="407"/>
    </location>
</feature>
<feature type="short sequence motif" description="'HIGH' region">
    <location>
        <begin position="54"/>
        <end position="63"/>
    </location>
</feature>
<feature type="short sequence motif" description="'KMSKS' region">
    <location>
        <begin position="238"/>
        <end position="242"/>
    </location>
</feature>
<feature type="binding site" evidence="1">
    <location>
        <position position="241"/>
    </location>
    <ligand>
        <name>ATP</name>
        <dbReference type="ChEBI" id="CHEBI:30616"/>
    </ligand>
</feature>
<accession>Q7VUW5</accession>
<gene>
    <name evidence="1" type="primary">tyrS</name>
    <name type="ordered locus">BP2954</name>
</gene>